<dbReference type="EC" id="2.5.1.75" evidence="1"/>
<dbReference type="EMBL" id="FM178379">
    <property type="protein sequence ID" value="CAQ80462.1"/>
    <property type="molecule type" value="Genomic_DNA"/>
</dbReference>
<dbReference type="RefSeq" id="WP_012551214.1">
    <property type="nucleotide sequence ID" value="NC_011312.1"/>
</dbReference>
<dbReference type="SMR" id="B6EMQ8"/>
<dbReference type="KEGG" id="vsa:VSAL_I2778"/>
<dbReference type="eggNOG" id="COG0324">
    <property type="taxonomic scope" value="Bacteria"/>
</dbReference>
<dbReference type="HOGENOM" id="CLU_032616_0_0_6"/>
<dbReference type="Proteomes" id="UP000001730">
    <property type="component" value="Chromosome 1"/>
</dbReference>
<dbReference type="GO" id="GO:0005524">
    <property type="term" value="F:ATP binding"/>
    <property type="evidence" value="ECO:0007669"/>
    <property type="project" value="UniProtKB-UniRule"/>
</dbReference>
<dbReference type="GO" id="GO:0052381">
    <property type="term" value="F:tRNA dimethylallyltransferase activity"/>
    <property type="evidence" value="ECO:0007669"/>
    <property type="project" value="UniProtKB-UniRule"/>
</dbReference>
<dbReference type="GO" id="GO:0006400">
    <property type="term" value="P:tRNA modification"/>
    <property type="evidence" value="ECO:0007669"/>
    <property type="project" value="TreeGrafter"/>
</dbReference>
<dbReference type="FunFam" id="1.10.20.140:FF:000001">
    <property type="entry name" value="tRNA dimethylallyltransferase"/>
    <property type="match status" value="1"/>
</dbReference>
<dbReference type="Gene3D" id="1.10.20.140">
    <property type="match status" value="1"/>
</dbReference>
<dbReference type="Gene3D" id="3.40.50.300">
    <property type="entry name" value="P-loop containing nucleotide triphosphate hydrolases"/>
    <property type="match status" value="1"/>
</dbReference>
<dbReference type="HAMAP" id="MF_00185">
    <property type="entry name" value="IPP_trans"/>
    <property type="match status" value="1"/>
</dbReference>
<dbReference type="InterPro" id="IPR039657">
    <property type="entry name" value="Dimethylallyltransferase"/>
</dbReference>
<dbReference type="InterPro" id="IPR018022">
    <property type="entry name" value="IPT"/>
</dbReference>
<dbReference type="InterPro" id="IPR027417">
    <property type="entry name" value="P-loop_NTPase"/>
</dbReference>
<dbReference type="NCBIfam" id="TIGR00174">
    <property type="entry name" value="miaA"/>
    <property type="match status" value="1"/>
</dbReference>
<dbReference type="PANTHER" id="PTHR11088">
    <property type="entry name" value="TRNA DIMETHYLALLYLTRANSFERASE"/>
    <property type="match status" value="1"/>
</dbReference>
<dbReference type="PANTHER" id="PTHR11088:SF60">
    <property type="entry name" value="TRNA DIMETHYLALLYLTRANSFERASE"/>
    <property type="match status" value="1"/>
</dbReference>
<dbReference type="Pfam" id="PF01715">
    <property type="entry name" value="IPPT"/>
    <property type="match status" value="1"/>
</dbReference>
<dbReference type="SUPFAM" id="SSF52540">
    <property type="entry name" value="P-loop containing nucleoside triphosphate hydrolases"/>
    <property type="match status" value="1"/>
</dbReference>
<protein>
    <recommendedName>
        <fullName evidence="1">tRNA dimethylallyltransferase</fullName>
        <ecNumber evidence="1">2.5.1.75</ecNumber>
    </recommendedName>
    <alternativeName>
        <fullName evidence="1">Dimethylallyl diphosphate:tRNA dimethylallyltransferase</fullName>
        <shortName evidence="1">DMAPP:tRNA dimethylallyltransferase</shortName>
        <shortName evidence="1">DMATase</shortName>
    </alternativeName>
    <alternativeName>
        <fullName evidence="1">Isopentenyl-diphosphate:tRNA isopentenyltransferase</fullName>
        <shortName evidence="1">IPP transferase</shortName>
        <shortName evidence="1">IPPT</shortName>
        <shortName evidence="1">IPTase</shortName>
    </alternativeName>
</protein>
<evidence type="ECO:0000255" key="1">
    <source>
        <dbReference type="HAMAP-Rule" id="MF_00185"/>
    </source>
</evidence>
<comment type="function">
    <text evidence="1">Catalyzes the transfer of a dimethylallyl group onto the adenine at position 37 in tRNAs that read codons beginning with uridine, leading to the formation of N6-(dimethylallyl)adenosine (i(6)A).</text>
</comment>
<comment type="catalytic activity">
    <reaction evidence="1">
        <text>adenosine(37) in tRNA + dimethylallyl diphosphate = N(6)-dimethylallyladenosine(37) in tRNA + diphosphate</text>
        <dbReference type="Rhea" id="RHEA:26482"/>
        <dbReference type="Rhea" id="RHEA-COMP:10162"/>
        <dbReference type="Rhea" id="RHEA-COMP:10375"/>
        <dbReference type="ChEBI" id="CHEBI:33019"/>
        <dbReference type="ChEBI" id="CHEBI:57623"/>
        <dbReference type="ChEBI" id="CHEBI:74411"/>
        <dbReference type="ChEBI" id="CHEBI:74415"/>
        <dbReference type="EC" id="2.5.1.75"/>
    </reaction>
</comment>
<comment type="cofactor">
    <cofactor evidence="1">
        <name>Mg(2+)</name>
        <dbReference type="ChEBI" id="CHEBI:18420"/>
    </cofactor>
</comment>
<comment type="subunit">
    <text evidence="1">Monomer.</text>
</comment>
<comment type="similarity">
    <text evidence="1">Belongs to the IPP transferase family.</text>
</comment>
<reference key="1">
    <citation type="journal article" date="2008" name="BMC Genomics">
        <title>The genome sequence of the fish pathogen Aliivibrio salmonicida strain LFI1238 shows extensive evidence of gene decay.</title>
        <authorList>
            <person name="Hjerde E."/>
            <person name="Lorentzen M.S."/>
            <person name="Holden M.T."/>
            <person name="Seeger K."/>
            <person name="Paulsen S."/>
            <person name="Bason N."/>
            <person name="Churcher C."/>
            <person name="Harris D."/>
            <person name="Norbertczak H."/>
            <person name="Quail M.A."/>
            <person name="Sanders S."/>
            <person name="Thurston S."/>
            <person name="Parkhill J."/>
            <person name="Willassen N.P."/>
            <person name="Thomson N.R."/>
        </authorList>
    </citation>
    <scope>NUCLEOTIDE SEQUENCE [LARGE SCALE GENOMIC DNA]</scope>
    <source>
        <strain>LFI1238</strain>
    </source>
</reference>
<proteinExistence type="inferred from homology"/>
<accession>B6EMQ8</accession>
<name>MIAA_ALISL</name>
<sequence>MNKALPQAIFLMGPTASGKTDLAIQLRKRFPVELISVDSALIYKGMDIGTAKPNETELLQAPHRLIDILDPAESYSVAEFRRDALKEMEDIVAQGKIPLLVGGTMLYYKALLEGLSPLPAADADIRAQIEQEAETLGWEAMHDQLKEIDPVSAERIHPNDPQRLSRALEVFRISGKTLTELTQVKGDALPYQVHQFAIAPKERAEIHRRIELRFDNMMKGGFEEEVRSLYERDDLHADLPSIRCVGYRQMWEYFDGEGTLDDAIFRGICATRQLAKRQITWLRSWKDLTWLDSDNIDGALQTISDRLDKKQAQ</sequence>
<organism>
    <name type="scientific">Aliivibrio salmonicida (strain LFI1238)</name>
    <name type="common">Vibrio salmonicida (strain LFI1238)</name>
    <dbReference type="NCBI Taxonomy" id="316275"/>
    <lineage>
        <taxon>Bacteria</taxon>
        <taxon>Pseudomonadati</taxon>
        <taxon>Pseudomonadota</taxon>
        <taxon>Gammaproteobacteria</taxon>
        <taxon>Vibrionales</taxon>
        <taxon>Vibrionaceae</taxon>
        <taxon>Aliivibrio</taxon>
    </lineage>
</organism>
<keyword id="KW-0067">ATP-binding</keyword>
<keyword id="KW-0460">Magnesium</keyword>
<keyword id="KW-0547">Nucleotide-binding</keyword>
<keyword id="KW-0808">Transferase</keyword>
<keyword id="KW-0819">tRNA processing</keyword>
<gene>
    <name evidence="1" type="primary">miaA</name>
    <name type="ordered locus">VSAL_I2778</name>
</gene>
<feature type="chain" id="PRO_1000098639" description="tRNA dimethylallyltransferase">
    <location>
        <begin position="1"/>
        <end position="313"/>
    </location>
</feature>
<feature type="region of interest" description="Interaction with substrate tRNA" evidence="1">
    <location>
        <begin position="38"/>
        <end position="41"/>
    </location>
</feature>
<feature type="region of interest" description="Interaction with substrate tRNA" evidence="1">
    <location>
        <begin position="162"/>
        <end position="166"/>
    </location>
</feature>
<feature type="region of interest" description="Interaction with substrate tRNA" evidence="1">
    <location>
        <begin position="243"/>
        <end position="248"/>
    </location>
</feature>
<feature type="region of interest" description="Interaction with substrate tRNA" evidence="1">
    <location>
        <begin position="276"/>
        <end position="283"/>
    </location>
</feature>
<feature type="binding site" evidence="1">
    <location>
        <begin position="13"/>
        <end position="20"/>
    </location>
    <ligand>
        <name>ATP</name>
        <dbReference type="ChEBI" id="CHEBI:30616"/>
    </ligand>
</feature>
<feature type="binding site" evidence="1">
    <location>
        <begin position="15"/>
        <end position="20"/>
    </location>
    <ligand>
        <name>substrate</name>
    </ligand>
</feature>
<feature type="site" description="Interaction with substrate tRNA" evidence="1">
    <location>
        <position position="104"/>
    </location>
</feature>
<feature type="site" description="Interaction with substrate tRNA" evidence="1">
    <location>
        <position position="126"/>
    </location>
</feature>